<gene>
    <name evidence="1" type="primary">plsY</name>
    <name type="ordered locus">AYWB_320</name>
</gene>
<accession>Q2NJF6</accession>
<reference key="1">
    <citation type="journal article" date="2006" name="J. Bacteriol.">
        <title>Living with genome instability: the adaptation of phytoplasmas to diverse environments of their insect and plant hosts.</title>
        <authorList>
            <person name="Bai X."/>
            <person name="Zhang J."/>
            <person name="Ewing A."/>
            <person name="Miller S.A."/>
            <person name="Jancso Radek A."/>
            <person name="Shevchenko D.V."/>
            <person name="Tsukerman K."/>
            <person name="Walunas T."/>
            <person name="Lapidus A."/>
            <person name="Campbell J.W."/>
            <person name="Hogenhout S.A."/>
        </authorList>
    </citation>
    <scope>NUCLEOTIDE SEQUENCE [LARGE SCALE GENOMIC DNA]</scope>
    <source>
        <strain>AYWB</strain>
    </source>
</reference>
<evidence type="ECO:0000255" key="1">
    <source>
        <dbReference type="HAMAP-Rule" id="MF_01043"/>
    </source>
</evidence>
<name>PLSY_AYWBP</name>
<sequence>MKKLSFLFLFLFFYILGSIPTGLVIGKLTQQKDLRNKGSGNIGATNAFRVLGKKWGILVFLLDFCKGFVPLTIFLHFSEFWPTEPSTQTFLQPHLTMKISLLAISPILGHMFSLFNKFKGGKAIATSVGIITSFNPLIGISGIIFFAIFLRLFGYASLSSIMASTLVNIFLWLNYLYCDNFGTLVPIQNQIQKPELFYFSINFATLIIIAKHYSNILRLIKGTENKFNFKK</sequence>
<keyword id="KW-1003">Cell membrane</keyword>
<keyword id="KW-0444">Lipid biosynthesis</keyword>
<keyword id="KW-0443">Lipid metabolism</keyword>
<keyword id="KW-0472">Membrane</keyword>
<keyword id="KW-0594">Phospholipid biosynthesis</keyword>
<keyword id="KW-1208">Phospholipid metabolism</keyword>
<keyword id="KW-0808">Transferase</keyword>
<keyword id="KW-0812">Transmembrane</keyword>
<keyword id="KW-1133">Transmembrane helix</keyword>
<feature type="chain" id="PRO_0000250284" description="Glycerol-3-phosphate acyltransferase">
    <location>
        <begin position="1"/>
        <end position="231"/>
    </location>
</feature>
<feature type="transmembrane region" description="Helical" evidence="1">
    <location>
        <begin position="6"/>
        <end position="26"/>
    </location>
</feature>
<feature type="transmembrane region" description="Helical" evidence="1">
    <location>
        <begin position="55"/>
        <end position="75"/>
    </location>
</feature>
<feature type="transmembrane region" description="Helical" evidence="1">
    <location>
        <begin position="95"/>
        <end position="115"/>
    </location>
</feature>
<feature type="transmembrane region" description="Helical" evidence="1">
    <location>
        <begin position="130"/>
        <end position="150"/>
    </location>
</feature>
<feature type="transmembrane region" description="Helical" evidence="1">
    <location>
        <begin position="152"/>
        <end position="172"/>
    </location>
</feature>
<feature type="transmembrane region" description="Helical" evidence="1">
    <location>
        <begin position="196"/>
        <end position="216"/>
    </location>
</feature>
<organism>
    <name type="scientific">Aster yellows witches'-broom phytoplasma (strain AYWB)</name>
    <dbReference type="NCBI Taxonomy" id="322098"/>
    <lineage>
        <taxon>Bacteria</taxon>
        <taxon>Bacillati</taxon>
        <taxon>Mycoplasmatota</taxon>
        <taxon>Mollicutes</taxon>
        <taxon>Acholeplasmatales</taxon>
        <taxon>Acholeplasmataceae</taxon>
        <taxon>Candidatus Phytoplasma</taxon>
        <taxon>16SrI (Aster yellows group)</taxon>
    </lineage>
</organism>
<comment type="function">
    <text evidence="1">Catalyzes the transfer of an acyl group from acyl-phosphate (acyl-PO(4)) to glycerol-3-phosphate (G3P) to form lysophosphatidic acid (LPA). This enzyme utilizes acyl-phosphate as fatty acyl donor, but not acyl-CoA or acyl-ACP.</text>
</comment>
<comment type="catalytic activity">
    <reaction evidence="1">
        <text>an acyl phosphate + sn-glycerol 3-phosphate = a 1-acyl-sn-glycero-3-phosphate + phosphate</text>
        <dbReference type="Rhea" id="RHEA:34075"/>
        <dbReference type="ChEBI" id="CHEBI:43474"/>
        <dbReference type="ChEBI" id="CHEBI:57597"/>
        <dbReference type="ChEBI" id="CHEBI:57970"/>
        <dbReference type="ChEBI" id="CHEBI:59918"/>
        <dbReference type="EC" id="2.3.1.275"/>
    </reaction>
</comment>
<comment type="pathway">
    <text evidence="1">Lipid metabolism; phospholipid metabolism.</text>
</comment>
<comment type="subunit">
    <text evidence="1">Probably interacts with PlsX.</text>
</comment>
<comment type="subcellular location">
    <subcellularLocation>
        <location evidence="1">Cell membrane</location>
        <topology evidence="1">Multi-pass membrane protein</topology>
    </subcellularLocation>
</comment>
<comment type="similarity">
    <text evidence="1">Belongs to the PlsY family.</text>
</comment>
<proteinExistence type="inferred from homology"/>
<dbReference type="EC" id="2.3.1.275" evidence="1"/>
<dbReference type="EMBL" id="CP000061">
    <property type="protein sequence ID" value="ABC65437.1"/>
    <property type="molecule type" value="Genomic_DNA"/>
</dbReference>
<dbReference type="RefSeq" id="WP_011412601.1">
    <property type="nucleotide sequence ID" value="NC_007716.1"/>
</dbReference>
<dbReference type="SMR" id="Q2NJF6"/>
<dbReference type="STRING" id="322098.AYWB_320"/>
<dbReference type="KEGG" id="ayw:AYWB_320"/>
<dbReference type="eggNOG" id="COG0344">
    <property type="taxonomic scope" value="Bacteria"/>
</dbReference>
<dbReference type="HOGENOM" id="CLU_081254_4_0_14"/>
<dbReference type="OrthoDB" id="9777124at2"/>
<dbReference type="PhylomeDB" id="Q2NJF6"/>
<dbReference type="UniPathway" id="UPA00085"/>
<dbReference type="Proteomes" id="UP000001934">
    <property type="component" value="Chromosome"/>
</dbReference>
<dbReference type="GO" id="GO:0005886">
    <property type="term" value="C:plasma membrane"/>
    <property type="evidence" value="ECO:0007669"/>
    <property type="project" value="UniProtKB-SubCell"/>
</dbReference>
<dbReference type="GO" id="GO:0043772">
    <property type="term" value="F:acyl-phosphate glycerol-3-phosphate acyltransferase activity"/>
    <property type="evidence" value="ECO:0007669"/>
    <property type="project" value="UniProtKB-UniRule"/>
</dbReference>
<dbReference type="GO" id="GO:0008654">
    <property type="term" value="P:phospholipid biosynthetic process"/>
    <property type="evidence" value="ECO:0007669"/>
    <property type="project" value="UniProtKB-UniRule"/>
</dbReference>
<dbReference type="HAMAP" id="MF_01043">
    <property type="entry name" value="PlsY"/>
    <property type="match status" value="1"/>
</dbReference>
<dbReference type="InterPro" id="IPR003811">
    <property type="entry name" value="G3P_acylTferase_PlsY"/>
</dbReference>
<dbReference type="NCBIfam" id="TIGR00023">
    <property type="entry name" value="glycerol-3-phosphate 1-O-acyltransferase PlsY"/>
    <property type="match status" value="1"/>
</dbReference>
<dbReference type="PANTHER" id="PTHR30309:SF0">
    <property type="entry name" value="GLYCEROL-3-PHOSPHATE ACYLTRANSFERASE-RELATED"/>
    <property type="match status" value="1"/>
</dbReference>
<dbReference type="PANTHER" id="PTHR30309">
    <property type="entry name" value="INNER MEMBRANE PROTEIN YGIH"/>
    <property type="match status" value="1"/>
</dbReference>
<dbReference type="Pfam" id="PF02660">
    <property type="entry name" value="G3P_acyltransf"/>
    <property type="match status" value="1"/>
</dbReference>
<dbReference type="SMART" id="SM01207">
    <property type="entry name" value="G3P_acyltransf"/>
    <property type="match status" value="1"/>
</dbReference>
<protein>
    <recommendedName>
        <fullName evidence="1">Glycerol-3-phosphate acyltransferase</fullName>
    </recommendedName>
    <alternativeName>
        <fullName evidence="1">Acyl-PO4 G3P acyltransferase</fullName>
    </alternativeName>
    <alternativeName>
        <fullName evidence="1">Acyl-phosphate--glycerol-3-phosphate acyltransferase</fullName>
    </alternativeName>
    <alternativeName>
        <fullName evidence="1">G3P acyltransferase</fullName>
        <shortName evidence="1">GPAT</shortName>
        <ecNumber evidence="1">2.3.1.275</ecNumber>
    </alternativeName>
    <alternativeName>
        <fullName evidence="1">Lysophosphatidic acid synthase</fullName>
        <shortName evidence="1">LPA synthase</shortName>
    </alternativeName>
</protein>